<reference key="1">
    <citation type="journal article" date="2005" name="Nucleic Acids Res.">
        <title>The genome sequence of Salmonella enterica serovar Choleraesuis, a highly invasive and resistant zoonotic pathogen.</title>
        <authorList>
            <person name="Chiu C.-H."/>
            <person name="Tang P."/>
            <person name="Chu C."/>
            <person name="Hu S."/>
            <person name="Bao Q."/>
            <person name="Yu J."/>
            <person name="Chou Y.-Y."/>
            <person name="Wang H.-S."/>
            <person name="Lee Y.-S."/>
        </authorList>
    </citation>
    <scope>NUCLEOTIDE SEQUENCE [LARGE SCALE GENOMIC DNA]</scope>
    <source>
        <strain>SC-B67</strain>
    </source>
</reference>
<keyword id="KW-0067">ATP-binding</keyword>
<keyword id="KW-0963">Cytoplasm</keyword>
<keyword id="KW-0227">DNA damage</keyword>
<keyword id="KW-0233">DNA recombination</keyword>
<keyword id="KW-0234">DNA repair</keyword>
<keyword id="KW-0238">DNA-binding</keyword>
<keyword id="KW-0378">Hydrolase</keyword>
<keyword id="KW-0547">Nucleotide-binding</keyword>
<dbReference type="EC" id="3.6.4.-" evidence="1"/>
<dbReference type="EMBL" id="AE017220">
    <property type="protein sequence ID" value="AAX65808.1"/>
    <property type="molecule type" value="Genomic_DNA"/>
</dbReference>
<dbReference type="RefSeq" id="WP_000568504.1">
    <property type="nucleotide sequence ID" value="NC_006905.1"/>
</dbReference>
<dbReference type="SMR" id="Q57NA3"/>
<dbReference type="KEGG" id="sec:SCH_1902"/>
<dbReference type="HOGENOM" id="CLU_055599_1_0_6"/>
<dbReference type="Proteomes" id="UP000000538">
    <property type="component" value="Chromosome"/>
</dbReference>
<dbReference type="GO" id="GO:0005737">
    <property type="term" value="C:cytoplasm"/>
    <property type="evidence" value="ECO:0007669"/>
    <property type="project" value="UniProtKB-SubCell"/>
</dbReference>
<dbReference type="GO" id="GO:0048476">
    <property type="term" value="C:Holliday junction resolvase complex"/>
    <property type="evidence" value="ECO:0007669"/>
    <property type="project" value="UniProtKB-UniRule"/>
</dbReference>
<dbReference type="GO" id="GO:0005524">
    <property type="term" value="F:ATP binding"/>
    <property type="evidence" value="ECO:0007669"/>
    <property type="project" value="UniProtKB-UniRule"/>
</dbReference>
<dbReference type="GO" id="GO:0016887">
    <property type="term" value="F:ATP hydrolysis activity"/>
    <property type="evidence" value="ECO:0007669"/>
    <property type="project" value="InterPro"/>
</dbReference>
<dbReference type="GO" id="GO:0000400">
    <property type="term" value="F:four-way junction DNA binding"/>
    <property type="evidence" value="ECO:0007669"/>
    <property type="project" value="UniProtKB-UniRule"/>
</dbReference>
<dbReference type="GO" id="GO:0009378">
    <property type="term" value="F:four-way junction helicase activity"/>
    <property type="evidence" value="ECO:0007669"/>
    <property type="project" value="InterPro"/>
</dbReference>
<dbReference type="GO" id="GO:0006310">
    <property type="term" value="P:DNA recombination"/>
    <property type="evidence" value="ECO:0007669"/>
    <property type="project" value="UniProtKB-UniRule"/>
</dbReference>
<dbReference type="GO" id="GO:0006281">
    <property type="term" value="P:DNA repair"/>
    <property type="evidence" value="ECO:0007669"/>
    <property type="project" value="UniProtKB-UniRule"/>
</dbReference>
<dbReference type="CDD" id="cd00009">
    <property type="entry name" value="AAA"/>
    <property type="match status" value="1"/>
</dbReference>
<dbReference type="FunFam" id="1.10.10.10:FF:000086">
    <property type="entry name" value="Holliday junction ATP-dependent DNA helicase RuvB"/>
    <property type="match status" value="1"/>
</dbReference>
<dbReference type="FunFam" id="1.10.8.60:FF:000023">
    <property type="entry name" value="Holliday junction ATP-dependent DNA helicase RuvB"/>
    <property type="match status" value="1"/>
</dbReference>
<dbReference type="FunFam" id="3.40.50.300:FF:000073">
    <property type="entry name" value="Holliday junction ATP-dependent DNA helicase RuvB"/>
    <property type="match status" value="1"/>
</dbReference>
<dbReference type="Gene3D" id="1.10.8.60">
    <property type="match status" value="1"/>
</dbReference>
<dbReference type="Gene3D" id="3.40.50.300">
    <property type="entry name" value="P-loop containing nucleotide triphosphate hydrolases"/>
    <property type="match status" value="1"/>
</dbReference>
<dbReference type="Gene3D" id="1.10.10.10">
    <property type="entry name" value="Winged helix-like DNA-binding domain superfamily/Winged helix DNA-binding domain"/>
    <property type="match status" value="1"/>
</dbReference>
<dbReference type="HAMAP" id="MF_00016">
    <property type="entry name" value="DNA_HJ_migration_RuvB"/>
    <property type="match status" value="1"/>
</dbReference>
<dbReference type="InterPro" id="IPR003593">
    <property type="entry name" value="AAA+_ATPase"/>
</dbReference>
<dbReference type="InterPro" id="IPR041445">
    <property type="entry name" value="AAA_lid_4"/>
</dbReference>
<dbReference type="InterPro" id="IPR004605">
    <property type="entry name" value="DNA_helicase_Holl-junc_RuvB"/>
</dbReference>
<dbReference type="InterPro" id="IPR027417">
    <property type="entry name" value="P-loop_NTPase"/>
</dbReference>
<dbReference type="InterPro" id="IPR008824">
    <property type="entry name" value="RuvB-like_N"/>
</dbReference>
<dbReference type="InterPro" id="IPR008823">
    <property type="entry name" value="RuvB_C"/>
</dbReference>
<dbReference type="InterPro" id="IPR036388">
    <property type="entry name" value="WH-like_DNA-bd_sf"/>
</dbReference>
<dbReference type="InterPro" id="IPR036390">
    <property type="entry name" value="WH_DNA-bd_sf"/>
</dbReference>
<dbReference type="NCBIfam" id="NF000868">
    <property type="entry name" value="PRK00080.1"/>
    <property type="match status" value="1"/>
</dbReference>
<dbReference type="NCBIfam" id="TIGR00635">
    <property type="entry name" value="ruvB"/>
    <property type="match status" value="1"/>
</dbReference>
<dbReference type="PANTHER" id="PTHR42848">
    <property type="match status" value="1"/>
</dbReference>
<dbReference type="PANTHER" id="PTHR42848:SF1">
    <property type="entry name" value="HOLLIDAY JUNCTION BRANCH MIGRATION COMPLEX SUBUNIT RUVB"/>
    <property type="match status" value="1"/>
</dbReference>
<dbReference type="Pfam" id="PF17864">
    <property type="entry name" value="AAA_lid_4"/>
    <property type="match status" value="1"/>
</dbReference>
<dbReference type="Pfam" id="PF05491">
    <property type="entry name" value="RuvB_C"/>
    <property type="match status" value="1"/>
</dbReference>
<dbReference type="Pfam" id="PF05496">
    <property type="entry name" value="RuvB_N"/>
    <property type="match status" value="1"/>
</dbReference>
<dbReference type="SMART" id="SM00382">
    <property type="entry name" value="AAA"/>
    <property type="match status" value="1"/>
</dbReference>
<dbReference type="SUPFAM" id="SSF52540">
    <property type="entry name" value="P-loop containing nucleoside triphosphate hydrolases"/>
    <property type="match status" value="1"/>
</dbReference>
<dbReference type="SUPFAM" id="SSF46785">
    <property type="entry name" value="Winged helix' DNA-binding domain"/>
    <property type="match status" value="1"/>
</dbReference>
<comment type="function">
    <text evidence="1">The RuvA-RuvB-RuvC complex processes Holliday junction (HJ) DNA during genetic recombination and DNA repair, while the RuvA-RuvB complex plays an important role in the rescue of blocked DNA replication forks via replication fork reversal (RFR). RuvA specifically binds to HJ cruciform DNA, conferring on it an open structure. The RuvB hexamer acts as an ATP-dependent pump, pulling dsDNA into and through the RuvAB complex. RuvB forms 2 homohexamers on either side of HJ DNA bound by 1 or 2 RuvA tetramers; 4 subunits per hexamer contact DNA at a time. Coordinated motions by a converter formed by DNA-disengaged RuvB subunits stimulates ATP hydrolysis and nucleotide exchange. Immobilization of the converter enables RuvB to convert the ATP-contained energy into a lever motion, pulling 2 nucleotides of DNA out of the RuvA tetramer per ATP hydrolyzed, thus driving DNA branch migration. The RuvB motors rotate together with the DNA substrate, which together with the progressing nucleotide cycle form the mechanistic basis for DNA recombination by continuous HJ branch migration. Branch migration allows RuvC to scan DNA until it finds its consensus sequence, where it cleaves and resolves cruciform DNA.</text>
</comment>
<comment type="catalytic activity">
    <reaction evidence="1">
        <text>ATP + H2O = ADP + phosphate + H(+)</text>
        <dbReference type="Rhea" id="RHEA:13065"/>
        <dbReference type="ChEBI" id="CHEBI:15377"/>
        <dbReference type="ChEBI" id="CHEBI:15378"/>
        <dbReference type="ChEBI" id="CHEBI:30616"/>
        <dbReference type="ChEBI" id="CHEBI:43474"/>
        <dbReference type="ChEBI" id="CHEBI:456216"/>
    </reaction>
</comment>
<comment type="subunit">
    <text evidence="1">Homohexamer. Forms an RuvA(8)-RuvB(12)-Holliday junction (HJ) complex. HJ DNA is sandwiched between 2 RuvA tetramers; dsDNA enters through RuvA and exits via RuvB. An RuvB hexamer assembles on each DNA strand where it exits the tetramer. Each RuvB hexamer is contacted by two RuvA subunits (via domain III) on 2 adjacent RuvB subunits; this complex drives branch migration. In the full resolvosome a probable DNA-RuvA(4)-RuvB(12)-RuvC(2) complex forms which resolves the HJ.</text>
</comment>
<comment type="subcellular location">
    <subcellularLocation>
        <location evidence="1">Cytoplasm</location>
    </subcellularLocation>
</comment>
<comment type="domain">
    <text evidence="1">Has 3 domains, the large (RuvB-L) and small ATPase (RuvB-S) domains and the C-terminal head (RuvB-H) domain. The head domain binds DNA, while the ATPase domains jointly bind ATP, ADP or are empty depending on the state of the subunit in the translocation cycle. During a single DNA translocation step the structure of each domain remains the same, but their relative positions change.</text>
</comment>
<comment type="similarity">
    <text evidence="1">Belongs to the RuvB family.</text>
</comment>
<feature type="chain" id="PRO_0000235401" description="Holliday junction branch migration complex subunit RuvB">
    <location>
        <begin position="1"/>
        <end position="336"/>
    </location>
</feature>
<feature type="region of interest" description="Large ATPase domain (RuvB-L)" evidence="1">
    <location>
        <begin position="4"/>
        <end position="184"/>
    </location>
</feature>
<feature type="region of interest" description="Small ATPAse domain (RuvB-S)" evidence="1">
    <location>
        <begin position="185"/>
        <end position="255"/>
    </location>
</feature>
<feature type="region of interest" description="Head domain (RuvB-H)" evidence="1">
    <location>
        <begin position="258"/>
        <end position="336"/>
    </location>
</feature>
<feature type="binding site" evidence="1">
    <location>
        <position position="23"/>
    </location>
    <ligand>
        <name>ATP</name>
        <dbReference type="ChEBI" id="CHEBI:30616"/>
    </ligand>
</feature>
<feature type="binding site" evidence="1">
    <location>
        <position position="24"/>
    </location>
    <ligand>
        <name>ATP</name>
        <dbReference type="ChEBI" id="CHEBI:30616"/>
    </ligand>
</feature>
<feature type="binding site" evidence="1">
    <location>
        <position position="65"/>
    </location>
    <ligand>
        <name>ATP</name>
        <dbReference type="ChEBI" id="CHEBI:30616"/>
    </ligand>
</feature>
<feature type="binding site" evidence="1">
    <location>
        <position position="68"/>
    </location>
    <ligand>
        <name>ATP</name>
        <dbReference type="ChEBI" id="CHEBI:30616"/>
    </ligand>
</feature>
<feature type="binding site" evidence="1">
    <location>
        <position position="69"/>
    </location>
    <ligand>
        <name>ATP</name>
        <dbReference type="ChEBI" id="CHEBI:30616"/>
    </ligand>
</feature>
<feature type="binding site" evidence="1">
    <location>
        <position position="69"/>
    </location>
    <ligand>
        <name>Mg(2+)</name>
        <dbReference type="ChEBI" id="CHEBI:18420"/>
    </ligand>
</feature>
<feature type="binding site" evidence="1">
    <location>
        <position position="70"/>
    </location>
    <ligand>
        <name>ATP</name>
        <dbReference type="ChEBI" id="CHEBI:30616"/>
    </ligand>
</feature>
<feature type="binding site" evidence="1">
    <location>
        <begin position="131"/>
        <end position="133"/>
    </location>
    <ligand>
        <name>ATP</name>
        <dbReference type="ChEBI" id="CHEBI:30616"/>
    </ligand>
</feature>
<feature type="binding site" evidence="1">
    <location>
        <position position="174"/>
    </location>
    <ligand>
        <name>ATP</name>
        <dbReference type="ChEBI" id="CHEBI:30616"/>
    </ligand>
</feature>
<feature type="binding site" evidence="1">
    <location>
        <position position="184"/>
    </location>
    <ligand>
        <name>ATP</name>
        <dbReference type="ChEBI" id="CHEBI:30616"/>
    </ligand>
</feature>
<feature type="binding site" evidence="1">
    <location>
        <position position="221"/>
    </location>
    <ligand>
        <name>ATP</name>
        <dbReference type="ChEBI" id="CHEBI:30616"/>
    </ligand>
</feature>
<feature type="binding site" evidence="1">
    <location>
        <position position="294"/>
    </location>
    <ligand>
        <name>DNA</name>
        <dbReference type="ChEBI" id="CHEBI:16991"/>
    </ligand>
</feature>
<feature type="binding site" evidence="1">
    <location>
        <position position="313"/>
    </location>
    <ligand>
        <name>DNA</name>
        <dbReference type="ChEBI" id="CHEBI:16991"/>
    </ligand>
</feature>
<feature type="binding site" evidence="1">
    <location>
        <position position="318"/>
    </location>
    <ligand>
        <name>DNA</name>
        <dbReference type="ChEBI" id="CHEBI:16991"/>
    </ligand>
</feature>
<evidence type="ECO:0000255" key="1">
    <source>
        <dbReference type="HAMAP-Rule" id="MF_00016"/>
    </source>
</evidence>
<name>RUVB_SALCH</name>
<gene>
    <name evidence="1" type="primary">ruvB</name>
    <name type="ordered locus">SCH_1902</name>
</gene>
<proteinExistence type="inferred from homology"/>
<protein>
    <recommendedName>
        <fullName evidence="1">Holliday junction branch migration complex subunit RuvB</fullName>
        <ecNumber evidence="1">3.6.4.-</ecNumber>
    </recommendedName>
</protein>
<organism>
    <name type="scientific">Salmonella choleraesuis (strain SC-B67)</name>
    <dbReference type="NCBI Taxonomy" id="321314"/>
    <lineage>
        <taxon>Bacteria</taxon>
        <taxon>Pseudomonadati</taxon>
        <taxon>Pseudomonadota</taxon>
        <taxon>Gammaproteobacteria</taxon>
        <taxon>Enterobacterales</taxon>
        <taxon>Enterobacteriaceae</taxon>
        <taxon>Salmonella</taxon>
    </lineage>
</organism>
<accession>Q57NA3</accession>
<sequence>MIEADRLISAGATIAEDVADRAIRPKLLAEYVGQPQVRSQMEIFIQAAKLRGDALDHLLIFGPPGLGKTTLANIVANEMGVNLRTTSGPVLEKAGDLAAMLTNLEPHDVLFIDEIHRLSPVVEEVLYPAMEDYQLDIMIGEGPAARSIKIDLPPFTLIGATTRAGSLTSPLRDRFGIVQRLEFYQVPDLQHIVGRSARHMGLEMSDDGALEVARRARGTPRIANRLLRRVRDFAEVKHDGAISAEIAAQALDMLNVDAEGFDYMDRKLLLAVIDKFFGGPVGLDNLAAAIGEERETIEDVLEPYLIQQGFLQRTPRGRMATVRAWNHFGITPPEMP</sequence>